<keyword id="KW-1185">Reference proteome</keyword>
<keyword id="KW-0687">Ribonucleoprotein</keyword>
<keyword id="KW-0689">Ribosomal protein</keyword>
<keyword id="KW-0694">RNA-binding</keyword>
<keyword id="KW-0699">rRNA-binding</keyword>
<name>RL18_MESFL</name>
<accession>Q6F1X8</accession>
<sequence length="115" mass="12696">MKYTKQEARKRRHYRVRSKVSGTAAKPRLNVFKSNTNFYAQIIDDTTGTTLVSASSLNLGLKSGNIEAAKKVAEEIAKLAIAKSIVDVVFDRGGYLYHGKVKAFAEAARENGLKF</sequence>
<feature type="chain" id="PRO_0000251326" description="Large ribosomal subunit protein uL18">
    <location>
        <begin position="1"/>
        <end position="115"/>
    </location>
</feature>
<feature type="region of interest" description="Disordered" evidence="2">
    <location>
        <begin position="1"/>
        <end position="20"/>
    </location>
</feature>
<feature type="compositionally biased region" description="Basic residues" evidence="2">
    <location>
        <begin position="8"/>
        <end position="18"/>
    </location>
</feature>
<dbReference type="EMBL" id="AE017263">
    <property type="protein sequence ID" value="AAT75495.1"/>
    <property type="molecule type" value="Genomic_DNA"/>
</dbReference>
<dbReference type="RefSeq" id="WP_011183036.1">
    <property type="nucleotide sequence ID" value="NC_006055.1"/>
</dbReference>
<dbReference type="RefSeq" id="YP_053379.1">
    <property type="nucleotide sequence ID" value="NC_006055.1"/>
</dbReference>
<dbReference type="SMR" id="Q6F1X8"/>
<dbReference type="STRING" id="265311.Mfl139"/>
<dbReference type="PaxDb" id="265311-Mfl139"/>
<dbReference type="EnsemblBacteria" id="AAT75495">
    <property type="protein sequence ID" value="AAT75495"/>
    <property type="gene ID" value="Mfl139"/>
</dbReference>
<dbReference type="GeneID" id="2898153"/>
<dbReference type="KEGG" id="mfl:Mfl139"/>
<dbReference type="PATRIC" id="fig|265311.5.peg.140"/>
<dbReference type="eggNOG" id="COG0256">
    <property type="taxonomic scope" value="Bacteria"/>
</dbReference>
<dbReference type="HOGENOM" id="CLU_098841_0_1_14"/>
<dbReference type="OrthoDB" id="9810939at2"/>
<dbReference type="Proteomes" id="UP000006647">
    <property type="component" value="Chromosome"/>
</dbReference>
<dbReference type="GO" id="GO:0005737">
    <property type="term" value="C:cytoplasm"/>
    <property type="evidence" value="ECO:0007669"/>
    <property type="project" value="UniProtKB-ARBA"/>
</dbReference>
<dbReference type="GO" id="GO:1990904">
    <property type="term" value="C:ribonucleoprotein complex"/>
    <property type="evidence" value="ECO:0007669"/>
    <property type="project" value="UniProtKB-KW"/>
</dbReference>
<dbReference type="GO" id="GO:0005840">
    <property type="term" value="C:ribosome"/>
    <property type="evidence" value="ECO:0007669"/>
    <property type="project" value="UniProtKB-KW"/>
</dbReference>
<dbReference type="GO" id="GO:0008097">
    <property type="term" value="F:5S rRNA binding"/>
    <property type="evidence" value="ECO:0007669"/>
    <property type="project" value="TreeGrafter"/>
</dbReference>
<dbReference type="GO" id="GO:0003735">
    <property type="term" value="F:structural constituent of ribosome"/>
    <property type="evidence" value="ECO:0007669"/>
    <property type="project" value="InterPro"/>
</dbReference>
<dbReference type="GO" id="GO:0006412">
    <property type="term" value="P:translation"/>
    <property type="evidence" value="ECO:0007669"/>
    <property type="project" value="UniProtKB-UniRule"/>
</dbReference>
<dbReference type="CDD" id="cd00432">
    <property type="entry name" value="Ribosomal_L18_L5e"/>
    <property type="match status" value="1"/>
</dbReference>
<dbReference type="FunFam" id="3.30.420.100:FF:000001">
    <property type="entry name" value="50S ribosomal protein L18"/>
    <property type="match status" value="1"/>
</dbReference>
<dbReference type="Gene3D" id="3.30.420.100">
    <property type="match status" value="1"/>
</dbReference>
<dbReference type="HAMAP" id="MF_01337_B">
    <property type="entry name" value="Ribosomal_uL18_B"/>
    <property type="match status" value="1"/>
</dbReference>
<dbReference type="InterPro" id="IPR004389">
    <property type="entry name" value="Ribosomal_uL18_bac-type"/>
</dbReference>
<dbReference type="InterPro" id="IPR005484">
    <property type="entry name" value="Ribosomal_uL18_bac/euk"/>
</dbReference>
<dbReference type="NCBIfam" id="TIGR00060">
    <property type="entry name" value="L18_bact"/>
    <property type="match status" value="1"/>
</dbReference>
<dbReference type="PANTHER" id="PTHR12899">
    <property type="entry name" value="39S RIBOSOMAL PROTEIN L18, MITOCHONDRIAL"/>
    <property type="match status" value="1"/>
</dbReference>
<dbReference type="PANTHER" id="PTHR12899:SF3">
    <property type="entry name" value="LARGE RIBOSOMAL SUBUNIT PROTEIN UL18M"/>
    <property type="match status" value="1"/>
</dbReference>
<dbReference type="Pfam" id="PF00861">
    <property type="entry name" value="Ribosomal_L18p"/>
    <property type="match status" value="1"/>
</dbReference>
<dbReference type="SUPFAM" id="SSF53137">
    <property type="entry name" value="Translational machinery components"/>
    <property type="match status" value="1"/>
</dbReference>
<gene>
    <name evidence="1" type="primary">rplR</name>
    <name type="ordered locus">Mfl139</name>
</gene>
<protein>
    <recommendedName>
        <fullName evidence="1">Large ribosomal subunit protein uL18</fullName>
    </recommendedName>
    <alternativeName>
        <fullName evidence="3">50S ribosomal protein L18</fullName>
    </alternativeName>
</protein>
<organism>
    <name type="scientific">Mesoplasma florum (strain ATCC 33453 / NBRC 100688 / NCTC 11704 / L1)</name>
    <name type="common">Acholeplasma florum</name>
    <dbReference type="NCBI Taxonomy" id="265311"/>
    <lineage>
        <taxon>Bacteria</taxon>
        <taxon>Bacillati</taxon>
        <taxon>Mycoplasmatota</taxon>
        <taxon>Mollicutes</taxon>
        <taxon>Entomoplasmatales</taxon>
        <taxon>Entomoplasmataceae</taxon>
        <taxon>Mesoplasma</taxon>
    </lineage>
</organism>
<reference key="1">
    <citation type="submission" date="2004-06" db="EMBL/GenBank/DDBJ databases">
        <authorList>
            <person name="Birren B.W."/>
            <person name="Stange-Thomann N."/>
            <person name="Hafez N."/>
            <person name="DeCaprio D."/>
            <person name="Fisher S."/>
            <person name="Butler J."/>
            <person name="Elkins T."/>
            <person name="Kodira C.D."/>
            <person name="Major J."/>
            <person name="Wang S."/>
            <person name="Nicol R."/>
            <person name="Nusbaum C."/>
        </authorList>
    </citation>
    <scope>NUCLEOTIDE SEQUENCE [LARGE SCALE GENOMIC DNA]</scope>
    <source>
        <strain>ATCC 33453 / NBRC 100688 / NCTC 11704 / L1</strain>
    </source>
</reference>
<evidence type="ECO:0000255" key="1">
    <source>
        <dbReference type="HAMAP-Rule" id="MF_01337"/>
    </source>
</evidence>
<evidence type="ECO:0000256" key="2">
    <source>
        <dbReference type="SAM" id="MobiDB-lite"/>
    </source>
</evidence>
<evidence type="ECO:0000305" key="3"/>
<proteinExistence type="inferred from homology"/>
<comment type="function">
    <text evidence="1">This is one of the proteins that bind and probably mediate the attachment of the 5S RNA into the large ribosomal subunit, where it forms part of the central protuberance.</text>
</comment>
<comment type="subunit">
    <text evidence="1">Part of the 50S ribosomal subunit; part of the 5S rRNA/L5/L18/L25 subcomplex. Contacts the 5S and 23S rRNAs.</text>
</comment>
<comment type="similarity">
    <text evidence="1">Belongs to the universal ribosomal protein uL18 family.</text>
</comment>